<organism>
    <name type="scientific">Burkholderia vietnamiensis (strain G4 / LMG 22486)</name>
    <name type="common">Burkholderia cepacia (strain R1808)</name>
    <dbReference type="NCBI Taxonomy" id="269482"/>
    <lineage>
        <taxon>Bacteria</taxon>
        <taxon>Pseudomonadati</taxon>
        <taxon>Pseudomonadota</taxon>
        <taxon>Betaproteobacteria</taxon>
        <taxon>Burkholderiales</taxon>
        <taxon>Burkholderiaceae</taxon>
        <taxon>Burkholderia</taxon>
        <taxon>Burkholderia cepacia complex</taxon>
    </lineage>
</organism>
<name>MHPC_BURVG</name>
<dbReference type="EC" id="3.7.1.14" evidence="2"/>
<dbReference type="EMBL" id="CP000615">
    <property type="protein sequence ID" value="ABO58328.1"/>
    <property type="molecule type" value="Genomic_DNA"/>
</dbReference>
<dbReference type="SMR" id="A4JPX5"/>
<dbReference type="ESTHER" id="burvg-mhpc">
    <property type="family name" value="Carbon-carbon_bond_hydrolase"/>
</dbReference>
<dbReference type="KEGG" id="bvi:Bcep1808_5382"/>
<dbReference type="eggNOG" id="COG2267">
    <property type="taxonomic scope" value="Bacteria"/>
</dbReference>
<dbReference type="HOGENOM" id="CLU_020336_13_2_4"/>
<dbReference type="UniPathway" id="UPA00714"/>
<dbReference type="Proteomes" id="UP000002287">
    <property type="component" value="Chromosome 2"/>
</dbReference>
<dbReference type="GO" id="GO:0005737">
    <property type="term" value="C:cytoplasm"/>
    <property type="evidence" value="ECO:0007669"/>
    <property type="project" value="InterPro"/>
</dbReference>
<dbReference type="GO" id="GO:0052823">
    <property type="term" value="F:2-hydroxy-6-oxonona-2,4,7-trienedioate hydrolase activity"/>
    <property type="evidence" value="ECO:0007669"/>
    <property type="project" value="RHEA"/>
</dbReference>
<dbReference type="GO" id="GO:0018771">
    <property type="term" value="F:2-hydroxy-6-oxonona-2,4-dienedioate hydrolase activity"/>
    <property type="evidence" value="ECO:0007669"/>
    <property type="project" value="UniProtKB-UniRule"/>
</dbReference>
<dbReference type="GO" id="GO:0042803">
    <property type="term" value="F:protein homodimerization activity"/>
    <property type="evidence" value="ECO:0007669"/>
    <property type="project" value="InterPro"/>
</dbReference>
<dbReference type="GO" id="GO:0019380">
    <property type="term" value="P:3-phenylpropionate catabolic process"/>
    <property type="evidence" value="ECO:0007669"/>
    <property type="project" value="UniProtKB-UniRule"/>
</dbReference>
<dbReference type="Gene3D" id="3.40.50.1820">
    <property type="entry name" value="alpha/beta hydrolase"/>
    <property type="match status" value="1"/>
</dbReference>
<dbReference type="HAMAP" id="MF_01654">
    <property type="entry name" value="MhpC"/>
    <property type="match status" value="1"/>
</dbReference>
<dbReference type="InterPro" id="IPR000073">
    <property type="entry name" value="AB_hydrolase_1"/>
</dbReference>
<dbReference type="InterPro" id="IPR029058">
    <property type="entry name" value="AB_hydrolase_fold"/>
</dbReference>
<dbReference type="InterPro" id="IPR000639">
    <property type="entry name" value="Epox_hydrolase-like"/>
</dbReference>
<dbReference type="InterPro" id="IPR023791">
    <property type="entry name" value="MhpC_alpha/beta_hydrolase"/>
</dbReference>
<dbReference type="PANTHER" id="PTHR43689:SF8">
    <property type="entry name" value="ALPHA_BETA-HYDROLASES SUPERFAMILY PROTEIN"/>
    <property type="match status" value="1"/>
</dbReference>
<dbReference type="PANTHER" id="PTHR43689">
    <property type="entry name" value="HYDROLASE"/>
    <property type="match status" value="1"/>
</dbReference>
<dbReference type="Pfam" id="PF00561">
    <property type="entry name" value="Abhydrolase_1"/>
    <property type="match status" value="1"/>
</dbReference>
<dbReference type="PRINTS" id="PR00111">
    <property type="entry name" value="ABHYDROLASE"/>
</dbReference>
<dbReference type="PRINTS" id="PR00412">
    <property type="entry name" value="EPOXHYDRLASE"/>
</dbReference>
<dbReference type="SUPFAM" id="SSF53474">
    <property type="entry name" value="alpha/beta-Hydrolases"/>
    <property type="match status" value="1"/>
</dbReference>
<proteinExistence type="inferred from homology"/>
<feature type="chain" id="PRO_0000337775" description="2-hydroxy-6-oxononadienedioate/2-hydroxy-6-oxononatrienedioate hydrolase">
    <location>
        <begin position="1"/>
        <end position="288"/>
    </location>
</feature>
<feature type="domain" description="AB hydrolase-1" evidence="1">
    <location>
        <begin position="38"/>
        <end position="274"/>
    </location>
</feature>
<feature type="active site" description="Proton acceptor" evidence="2">
    <location>
        <position position="268"/>
    </location>
</feature>
<feature type="site" description="Transition state stabilizer" evidence="2">
    <location>
        <position position="115"/>
    </location>
</feature>
<feature type="site" description="Catalytic role in ketonization of the dienol substrate (substrate destabilization)" evidence="2">
    <location>
        <position position="193"/>
    </location>
</feature>
<evidence type="ECO:0000255" key="1"/>
<evidence type="ECO:0000255" key="2">
    <source>
        <dbReference type="HAMAP-Rule" id="MF_01654"/>
    </source>
</evidence>
<protein>
    <recommendedName>
        <fullName evidence="2">2-hydroxy-6-oxononadienedioate/2-hydroxy-6-oxononatrienedioate hydrolase</fullName>
        <ecNumber evidence="2">3.7.1.14</ecNumber>
    </recommendedName>
    <alternativeName>
        <fullName evidence="2">2-hydroxy-6-ketonona-2,4-diene-1,9-dioic acid 5,6-hydrolase</fullName>
    </alternativeName>
    <alternativeName>
        <fullName evidence="2">2-hydroxy-6-oxonona-2,4,7-triene-1,9-dioic acid 5,6-hydrolase</fullName>
    </alternativeName>
    <alternativeName>
        <fullName evidence="2">2-hydroxy-6-oxonona-2,4-diene-1,9-dioic acid 5,6-hydrolase</fullName>
    </alternativeName>
</protein>
<reference key="1">
    <citation type="submission" date="2007-03" db="EMBL/GenBank/DDBJ databases">
        <title>Complete sequence of chromosome 2 of Burkholderia vietnamiensis G4.</title>
        <authorList>
            <consortium name="US DOE Joint Genome Institute"/>
            <person name="Copeland A."/>
            <person name="Lucas S."/>
            <person name="Lapidus A."/>
            <person name="Barry K."/>
            <person name="Detter J.C."/>
            <person name="Glavina del Rio T."/>
            <person name="Hammon N."/>
            <person name="Israni S."/>
            <person name="Dalin E."/>
            <person name="Tice H."/>
            <person name="Pitluck S."/>
            <person name="Chain P."/>
            <person name="Malfatti S."/>
            <person name="Shin M."/>
            <person name="Vergez L."/>
            <person name="Schmutz J."/>
            <person name="Larimer F."/>
            <person name="Land M."/>
            <person name="Hauser L."/>
            <person name="Kyrpides N."/>
            <person name="Tiedje J."/>
            <person name="Richardson P."/>
        </authorList>
    </citation>
    <scope>NUCLEOTIDE SEQUENCE [LARGE SCALE GENOMIC DNA]</scope>
    <source>
        <strain>G4 / LMG 22486</strain>
    </source>
</reference>
<gene>
    <name evidence="2" type="primary">mhpC</name>
    <name type="ordered locus">Bcep1808_5382</name>
</gene>
<keyword id="KW-0058">Aromatic hydrocarbons catabolism</keyword>
<keyword id="KW-0378">Hydrolase</keyword>
<comment type="function">
    <text evidence="2">Catalyzes the cleavage of the C5-C6 bond of 2-hydroxy-6-oxononadienedioate and 2-hydroxy-6-oxononatrienedioate, a dienol ring fission product of the bacterial meta-cleavage pathway for degradation of phenylpropionic acid.</text>
</comment>
<comment type="catalytic activity">
    <reaction evidence="2">
        <text>(2Z,4E)-2-hydroxy-6-oxonona-2,4-dienedioate + H2O = (2Z)-2-hydroxypenta-2,4-dienoate + succinate + H(+)</text>
        <dbReference type="Rhea" id="RHEA:34187"/>
        <dbReference type="ChEBI" id="CHEBI:15377"/>
        <dbReference type="ChEBI" id="CHEBI:15378"/>
        <dbReference type="ChEBI" id="CHEBI:30031"/>
        <dbReference type="ChEBI" id="CHEBI:66887"/>
        <dbReference type="ChEBI" id="CHEBI:67152"/>
        <dbReference type="EC" id="3.7.1.14"/>
    </reaction>
</comment>
<comment type="catalytic activity">
    <reaction evidence="2">
        <text>(2Z,4E,7E)-2-hydroxy-6-oxonona-2,4,7-trienedioate + H2O = (2Z)-2-hydroxypenta-2,4-dienoate + fumarate + H(+)</text>
        <dbReference type="Rhea" id="RHEA:34191"/>
        <dbReference type="ChEBI" id="CHEBI:15377"/>
        <dbReference type="ChEBI" id="CHEBI:15378"/>
        <dbReference type="ChEBI" id="CHEBI:29806"/>
        <dbReference type="ChEBI" id="CHEBI:66888"/>
        <dbReference type="ChEBI" id="CHEBI:67152"/>
        <dbReference type="EC" id="3.7.1.14"/>
    </reaction>
</comment>
<comment type="pathway">
    <text evidence="2">Aromatic compound metabolism; 3-phenylpropanoate degradation.</text>
</comment>
<comment type="subunit">
    <text evidence="2">Homodimer.</text>
</comment>
<comment type="similarity">
    <text evidence="2">Belongs to the AB hydrolase superfamily. MhpC family.</text>
</comment>
<accession>A4JPX5</accession>
<sequence length="288" mass="31864">MTDTVIHTESATSKYVNVVEDGTELRVHYNDTGTGNEALVLLHGSGPGATGWANFHRNVDAFANAGYRVILVDCPGWGKSDSIVCTGSRSDLNARVLAGVLDTLGIGRAHLVGNSMGGHSAVAFALSYPERVGKLVLMGGGTGGPSQFVPMPTEGIKLLQALYRDPTLENLKKMLNVFVYDASTMTEELMQTRLENMLGRRDHLENFVKSLTANPKQFPDYGHRLSEIKAPALVIWGRDDRFVPMDVGLRLVWNMPNADLHVFGRCGHWAQWEHAERFNRMVLEFLRR</sequence>